<feature type="signal peptide" evidence="2">
    <location>
        <begin position="1"/>
        <end position="18"/>
    </location>
</feature>
<feature type="chain" id="PRO_0000045127" description="Lipoprotein NlpI">
    <location>
        <begin position="19"/>
        <end position="294"/>
    </location>
</feature>
<feature type="repeat" description="TPR 1">
    <location>
        <begin position="62"/>
        <end position="95"/>
    </location>
</feature>
<feature type="repeat" description="TPR 2">
    <location>
        <begin position="96"/>
        <end position="129"/>
    </location>
</feature>
<feature type="repeat" description="TPR 3">
    <location>
        <begin position="234"/>
        <end position="267"/>
    </location>
</feature>
<feature type="lipid moiety-binding region" description="N-palmitoyl cysteine" evidence="2">
    <location>
        <position position="19"/>
    </location>
</feature>
<feature type="lipid moiety-binding region" description="S-diacylglycerol cysteine" evidence="2">
    <location>
        <position position="19"/>
    </location>
</feature>
<evidence type="ECO:0000250" key="1"/>
<evidence type="ECO:0000255" key="2">
    <source>
        <dbReference type="PROSITE-ProRule" id="PRU00303"/>
    </source>
</evidence>
<evidence type="ECO:0000269" key="3">
    <source>
    </source>
</evidence>
<name>NLPI_ECO57</name>
<accession>P0AFB3</accession>
<accession>P39833</accession>
<protein>
    <recommendedName>
        <fullName>Lipoprotein NlpI</fullName>
    </recommendedName>
</protein>
<proteinExistence type="evidence at transcript level"/>
<comment type="function">
    <text evidence="1">May be involved in cell division. May play a role in bacterial septation or regulation of cell wall degradation during cell division (By similarity).</text>
</comment>
<comment type="subunit">
    <text evidence="1">Homodimer.</text>
</comment>
<comment type="subcellular location">
    <subcellularLocation>
        <location evidence="2">Cell membrane</location>
        <topology evidence="2">Lipid-anchor</topology>
    </subcellularLocation>
</comment>
<comment type="induction">
    <text evidence="3">By high pressure at 500 MPa for 1 minute.</text>
</comment>
<gene>
    <name type="primary">nlpI</name>
    <name type="ordered locus">Z4524</name>
    <name type="ordered locus">ECs4044</name>
</gene>
<keyword id="KW-0131">Cell cycle</keyword>
<keyword id="KW-0132">Cell division</keyword>
<keyword id="KW-1003">Cell membrane</keyword>
<keyword id="KW-0449">Lipoprotein</keyword>
<keyword id="KW-0472">Membrane</keyword>
<keyword id="KW-0564">Palmitate</keyword>
<keyword id="KW-1185">Reference proteome</keyword>
<keyword id="KW-0677">Repeat</keyword>
<keyword id="KW-0732">Signal</keyword>
<keyword id="KW-0802">TPR repeat</keyword>
<sequence>MKPFLRWCFVATALTLAGCSNTSWRKSEVLAVPLQPTLQQEVILARMEQILASRALTDDERAQLLYERGVLYDSLGLRALARNDFSQALAIRPDMPEVFNYLGIYLTQAGNFDAAYEAFDSVLELDPTYNYAHLNRGIALYYGGRDKLAQDDLLAFYQDDPNDPFRSLWLYLAEQKLDEKQAKEVLKQHFEKSDKEQWGWNIVEFYLGNISEQTLMERLKADATDNTSLAEHLSETNFYLGKYYLSLGDLDSATALFKLAVANNVHNFVEHRYALLELSLLGQDQDDLAESDQQ</sequence>
<reference key="1">
    <citation type="journal article" date="2001" name="Nature">
        <title>Genome sequence of enterohaemorrhagic Escherichia coli O157:H7.</title>
        <authorList>
            <person name="Perna N.T."/>
            <person name="Plunkett G. III"/>
            <person name="Burland V."/>
            <person name="Mau B."/>
            <person name="Glasner J.D."/>
            <person name="Rose D.J."/>
            <person name="Mayhew G.F."/>
            <person name="Evans P.S."/>
            <person name="Gregor J."/>
            <person name="Kirkpatrick H.A."/>
            <person name="Posfai G."/>
            <person name="Hackett J."/>
            <person name="Klink S."/>
            <person name="Boutin A."/>
            <person name="Shao Y."/>
            <person name="Miller L."/>
            <person name="Grotbeck E.J."/>
            <person name="Davis N.W."/>
            <person name="Lim A."/>
            <person name="Dimalanta E.T."/>
            <person name="Potamousis K."/>
            <person name="Apodaca J."/>
            <person name="Anantharaman T.S."/>
            <person name="Lin J."/>
            <person name="Yen G."/>
            <person name="Schwartz D.C."/>
            <person name="Welch R.A."/>
            <person name="Blattner F.R."/>
        </authorList>
    </citation>
    <scope>NUCLEOTIDE SEQUENCE [LARGE SCALE GENOMIC DNA]</scope>
    <source>
        <strain>O157:H7 / EDL933 / ATCC 700927 / EHEC</strain>
    </source>
</reference>
<reference key="2">
    <citation type="journal article" date="2001" name="DNA Res.">
        <title>Complete genome sequence of enterohemorrhagic Escherichia coli O157:H7 and genomic comparison with a laboratory strain K-12.</title>
        <authorList>
            <person name="Hayashi T."/>
            <person name="Makino K."/>
            <person name="Ohnishi M."/>
            <person name="Kurokawa K."/>
            <person name="Ishii K."/>
            <person name="Yokoyama K."/>
            <person name="Han C.-G."/>
            <person name="Ohtsubo E."/>
            <person name="Nakayama K."/>
            <person name="Murata T."/>
            <person name="Tanaka M."/>
            <person name="Tobe T."/>
            <person name="Iida T."/>
            <person name="Takami H."/>
            <person name="Honda T."/>
            <person name="Sasakawa C."/>
            <person name="Ogasawara N."/>
            <person name="Yasunaga T."/>
            <person name="Kuhara S."/>
            <person name="Shiba T."/>
            <person name="Hattori M."/>
            <person name="Shinagawa H."/>
        </authorList>
    </citation>
    <scope>NUCLEOTIDE SEQUENCE [LARGE SCALE GENOMIC DNA]</scope>
    <source>
        <strain>O157:H7 / Sakai / RIMD 0509952 / EHEC</strain>
    </source>
</reference>
<reference key="3">
    <citation type="journal article" date="2006" name="Appl. Environ. Microbiol.">
        <title>Genes of Escherichia coli O157:H7 that are involved in high-pressure resistance.</title>
        <authorList>
            <person name="Malone A.S."/>
            <person name="Chung Y.K."/>
            <person name="Yousef A.E."/>
        </authorList>
    </citation>
    <scope>INDUCTION BY HIGH PRESSURE</scope>
</reference>
<dbReference type="EMBL" id="AE005174">
    <property type="protein sequence ID" value="AAG58299.1"/>
    <property type="molecule type" value="Genomic_DNA"/>
</dbReference>
<dbReference type="EMBL" id="BA000007">
    <property type="protein sequence ID" value="BAB37467.1"/>
    <property type="molecule type" value="Genomic_DNA"/>
</dbReference>
<dbReference type="PIR" id="D91134">
    <property type="entry name" value="D91134"/>
</dbReference>
<dbReference type="PIR" id="G85979">
    <property type="entry name" value="G85979"/>
</dbReference>
<dbReference type="RefSeq" id="WP_000802080.1">
    <property type="nucleotide sequence ID" value="NZ_VOAI01000014.1"/>
</dbReference>
<dbReference type="SMR" id="P0AFB3"/>
<dbReference type="STRING" id="155864.Z4524"/>
<dbReference type="GeneID" id="93778820"/>
<dbReference type="KEGG" id="ece:Z4524"/>
<dbReference type="KEGG" id="ecs:ECs_4044"/>
<dbReference type="PATRIC" id="fig|386585.9.peg.4223"/>
<dbReference type="eggNOG" id="COG4785">
    <property type="taxonomic scope" value="Bacteria"/>
</dbReference>
<dbReference type="HOGENOM" id="CLU_071600_0_0_6"/>
<dbReference type="OMA" id="YVEHRYS"/>
<dbReference type="Proteomes" id="UP000000558">
    <property type="component" value="Chromosome"/>
</dbReference>
<dbReference type="Proteomes" id="UP000002519">
    <property type="component" value="Chromosome"/>
</dbReference>
<dbReference type="GO" id="GO:0005886">
    <property type="term" value="C:plasma membrane"/>
    <property type="evidence" value="ECO:0007669"/>
    <property type="project" value="UniProtKB-SubCell"/>
</dbReference>
<dbReference type="GO" id="GO:0051301">
    <property type="term" value="P:cell division"/>
    <property type="evidence" value="ECO:0007669"/>
    <property type="project" value="UniProtKB-KW"/>
</dbReference>
<dbReference type="FunFam" id="1.25.40.10:FF:000021">
    <property type="entry name" value="Lipoprotein NlpI"/>
    <property type="match status" value="1"/>
</dbReference>
<dbReference type="Gene3D" id="1.25.40.10">
    <property type="entry name" value="Tetratricopeptide repeat domain"/>
    <property type="match status" value="1"/>
</dbReference>
<dbReference type="InterPro" id="IPR023605">
    <property type="entry name" value="Lipoprotein_NlpI"/>
</dbReference>
<dbReference type="InterPro" id="IPR011990">
    <property type="entry name" value="TPR-like_helical_dom_sf"/>
</dbReference>
<dbReference type="InterPro" id="IPR019734">
    <property type="entry name" value="TPR_rpt"/>
</dbReference>
<dbReference type="InterPro" id="IPR050498">
    <property type="entry name" value="Ycf3"/>
</dbReference>
<dbReference type="NCBIfam" id="NF008391">
    <property type="entry name" value="PRK11189.1"/>
    <property type="match status" value="1"/>
</dbReference>
<dbReference type="PANTHER" id="PTHR44858">
    <property type="entry name" value="TETRATRICOPEPTIDE REPEAT PROTEIN 6"/>
    <property type="match status" value="1"/>
</dbReference>
<dbReference type="PANTHER" id="PTHR44858:SF1">
    <property type="entry name" value="UDP-N-ACETYLGLUCOSAMINE--PEPTIDE N-ACETYLGLUCOSAMINYLTRANSFERASE SPINDLY-RELATED"/>
    <property type="match status" value="1"/>
</dbReference>
<dbReference type="Pfam" id="PF13432">
    <property type="entry name" value="TPR_16"/>
    <property type="match status" value="1"/>
</dbReference>
<dbReference type="PIRSF" id="PIRSF004654">
    <property type="entry name" value="NlpI"/>
    <property type="match status" value="1"/>
</dbReference>
<dbReference type="SMART" id="SM00028">
    <property type="entry name" value="TPR"/>
    <property type="match status" value="3"/>
</dbReference>
<dbReference type="SUPFAM" id="SSF48452">
    <property type="entry name" value="TPR-like"/>
    <property type="match status" value="1"/>
</dbReference>
<dbReference type="PROSITE" id="PS51257">
    <property type="entry name" value="PROKAR_LIPOPROTEIN"/>
    <property type="match status" value="1"/>
</dbReference>
<dbReference type="PROSITE" id="PS50005">
    <property type="entry name" value="TPR"/>
    <property type="match status" value="3"/>
</dbReference>
<dbReference type="PROSITE" id="PS50293">
    <property type="entry name" value="TPR_REGION"/>
    <property type="match status" value="2"/>
</dbReference>
<organism>
    <name type="scientific">Escherichia coli O157:H7</name>
    <dbReference type="NCBI Taxonomy" id="83334"/>
    <lineage>
        <taxon>Bacteria</taxon>
        <taxon>Pseudomonadati</taxon>
        <taxon>Pseudomonadota</taxon>
        <taxon>Gammaproteobacteria</taxon>
        <taxon>Enterobacterales</taxon>
        <taxon>Enterobacteriaceae</taxon>
        <taxon>Escherichia</taxon>
    </lineage>
</organism>